<reference evidence="13" key="1">
    <citation type="journal article" date="2009" name="Arch. Insect Biochem. Physiol.">
        <title>Expression, purification, and characterization of pro-phenoloxidase-activating serine protease from Spodoptera litura.</title>
        <authorList>
            <person name="Arora N."/>
            <person name="Hoque M.E."/>
            <person name="Rajagopal R."/>
            <person name="Sachdev B."/>
            <person name="Bhatnagar R.K."/>
        </authorList>
    </citation>
    <scope>NUCLEOTIDE SEQUENCE [MRNA]</scope>
    <scope>FUNCTION</scope>
    <scope>CATALYTIC ACTIVITY</scope>
    <scope>ACTIVITY REGULATION</scope>
    <scope>SUBCELLULAR LOCATION</scope>
    <scope>TISSUE SPECIFICITY</scope>
    <scope>DEVELOPMENTAL STAGE</scope>
    <scope>INDUCTION</scope>
    <scope>PTM</scope>
    <source>
        <tissue evidence="10">Hemocyte</tissue>
    </source>
</reference>
<comment type="function">
    <text evidence="12">Serine protease which, by cleaving and activating prophenoloxidase (PPO1) after immune challenge, plays an essential role in the melanization immune response to wounding.</text>
</comment>
<comment type="activity regulation">
    <text evidence="9">Inhibited by aprotenin. Not inhibited by EDTA, PMSF or leupeptin.</text>
</comment>
<comment type="subcellular location">
    <subcellularLocation>
        <location evidence="7 9">Secreted</location>
    </subcellularLocation>
    <text evidence="9">Secreted in the hemolymph.</text>
</comment>
<comment type="tissue specificity">
    <text evidence="9">Expressed in hemocytes.</text>
</comment>
<comment type="developmental stage">
    <text evidence="9">Expressed in larvae.</text>
</comment>
<comment type="induction">
    <text evidence="9">Upon physical injury. Up-regulated 5-fold after 6 hours and 15-fold after 18 hours of injury.</text>
</comment>
<comment type="domain">
    <text evidence="5 7">The clip domain consists of 35-55 residues which are 'knitted' together usually by 3 conserved disulfide bonds forming a clip-like compact structure.</text>
</comment>
<comment type="PTM">
    <text evidence="12">Activated by the removal of the N-terminal inhibitory propeptide.</text>
</comment>
<comment type="similarity">
    <text evidence="5 7">Belongs to the peptidase S1 family. CLIP subfamily.</text>
</comment>
<dbReference type="EC" id="3.4.21.-" evidence="4 6 9"/>
<dbReference type="EMBL" id="AY677081">
    <property type="protein sequence ID" value="AAW24480.1"/>
    <property type="molecule type" value="mRNA"/>
</dbReference>
<dbReference type="SMR" id="Q49QW1"/>
<dbReference type="MEROPS" id="S01.427"/>
<dbReference type="Proteomes" id="UP000301870">
    <property type="component" value="Unplaced"/>
</dbReference>
<dbReference type="GO" id="GO:0005615">
    <property type="term" value="C:extracellular space"/>
    <property type="evidence" value="ECO:0000314"/>
    <property type="project" value="UniProtKB"/>
</dbReference>
<dbReference type="GO" id="GO:0005509">
    <property type="term" value="F:calcium ion binding"/>
    <property type="evidence" value="ECO:0000250"/>
    <property type="project" value="UniProtKB"/>
</dbReference>
<dbReference type="GO" id="GO:0004252">
    <property type="term" value="F:serine-type endopeptidase activity"/>
    <property type="evidence" value="ECO:0000314"/>
    <property type="project" value="UniProtKB"/>
</dbReference>
<dbReference type="GO" id="GO:0009612">
    <property type="term" value="P:response to mechanical stimulus"/>
    <property type="evidence" value="ECO:0000270"/>
    <property type="project" value="UniProtKB"/>
</dbReference>
<dbReference type="GO" id="GO:0031638">
    <property type="term" value="P:zymogen activation"/>
    <property type="evidence" value="ECO:0000314"/>
    <property type="project" value="UniProtKB"/>
</dbReference>
<dbReference type="CDD" id="cd00190">
    <property type="entry name" value="Tryp_SPc"/>
    <property type="match status" value="1"/>
</dbReference>
<dbReference type="FunFam" id="2.40.10.10:FF:000146">
    <property type="entry name" value="Serine protease 53"/>
    <property type="match status" value="1"/>
</dbReference>
<dbReference type="Gene3D" id="3.30.1640.30">
    <property type="match status" value="1"/>
</dbReference>
<dbReference type="Gene3D" id="2.40.10.10">
    <property type="entry name" value="Trypsin-like serine proteases"/>
    <property type="match status" value="2"/>
</dbReference>
<dbReference type="InterPro" id="IPR022700">
    <property type="entry name" value="CLIP"/>
</dbReference>
<dbReference type="InterPro" id="IPR038565">
    <property type="entry name" value="CLIP_sf"/>
</dbReference>
<dbReference type="InterPro" id="IPR009003">
    <property type="entry name" value="Peptidase_S1_PA"/>
</dbReference>
<dbReference type="InterPro" id="IPR043504">
    <property type="entry name" value="Peptidase_S1_PA_chymotrypsin"/>
</dbReference>
<dbReference type="InterPro" id="IPR001314">
    <property type="entry name" value="Peptidase_S1A"/>
</dbReference>
<dbReference type="InterPro" id="IPR051487">
    <property type="entry name" value="Ser/Thr_Proteases_Immune/Dev"/>
</dbReference>
<dbReference type="InterPro" id="IPR001254">
    <property type="entry name" value="Trypsin_dom"/>
</dbReference>
<dbReference type="InterPro" id="IPR018114">
    <property type="entry name" value="TRYPSIN_HIS"/>
</dbReference>
<dbReference type="InterPro" id="IPR033116">
    <property type="entry name" value="TRYPSIN_SER"/>
</dbReference>
<dbReference type="PANTHER" id="PTHR24256">
    <property type="entry name" value="TRYPTASE-RELATED"/>
    <property type="match status" value="1"/>
</dbReference>
<dbReference type="Pfam" id="PF12032">
    <property type="entry name" value="CLIP"/>
    <property type="match status" value="1"/>
</dbReference>
<dbReference type="Pfam" id="PF00089">
    <property type="entry name" value="Trypsin"/>
    <property type="match status" value="1"/>
</dbReference>
<dbReference type="PRINTS" id="PR00722">
    <property type="entry name" value="CHYMOTRYPSIN"/>
</dbReference>
<dbReference type="SMART" id="SM00680">
    <property type="entry name" value="CLIP"/>
    <property type="match status" value="1"/>
</dbReference>
<dbReference type="SMART" id="SM00020">
    <property type="entry name" value="Tryp_SPc"/>
    <property type="match status" value="1"/>
</dbReference>
<dbReference type="SUPFAM" id="SSF50494">
    <property type="entry name" value="Trypsin-like serine proteases"/>
    <property type="match status" value="1"/>
</dbReference>
<dbReference type="PROSITE" id="PS51888">
    <property type="entry name" value="CLIP"/>
    <property type="match status" value="1"/>
</dbReference>
<dbReference type="PROSITE" id="PS50240">
    <property type="entry name" value="TRYPSIN_DOM"/>
    <property type="match status" value="1"/>
</dbReference>
<dbReference type="PROSITE" id="PS00134">
    <property type="entry name" value="TRYPSIN_HIS"/>
    <property type="match status" value="1"/>
</dbReference>
<dbReference type="PROSITE" id="PS00135">
    <property type="entry name" value="TRYPSIN_SER"/>
    <property type="match status" value="1"/>
</dbReference>
<feature type="signal peptide" evidence="3">
    <location>
        <begin position="1"/>
        <end position="19"/>
    </location>
</feature>
<feature type="propeptide" id="PRO_0000450806" description="Activation peptide" evidence="2">
    <location>
        <begin position="20"/>
        <end position="120"/>
    </location>
</feature>
<feature type="chain" id="PRO_5023968796" description="Phenoloxidase-activating enzyme 1" evidence="2">
    <location>
        <begin position="121"/>
        <end position="374"/>
    </location>
</feature>
<feature type="domain" description="Clip" evidence="5">
    <location>
        <begin position="21"/>
        <end position="74"/>
    </location>
</feature>
<feature type="domain" description="Peptidase S1" evidence="4">
    <location>
        <begin position="121"/>
        <end position="370"/>
    </location>
</feature>
<feature type="region of interest" description="Disordered" evidence="8">
    <location>
        <begin position="83"/>
        <end position="114"/>
    </location>
</feature>
<feature type="compositionally biased region" description="Polar residues" evidence="8">
    <location>
        <begin position="83"/>
        <end position="97"/>
    </location>
</feature>
<feature type="active site" description="Charge relay system" evidence="4">
    <location>
        <position position="166"/>
    </location>
</feature>
<feature type="active site" description="Charge relay system" evidence="4">
    <location>
        <position position="228"/>
    </location>
</feature>
<feature type="active site" description="Charge relay system" evidence="4">
    <location>
        <position position="321"/>
    </location>
</feature>
<feature type="binding site" evidence="1">
    <location>
        <position position="186"/>
    </location>
    <ligand>
        <name>Ca(2+)</name>
        <dbReference type="ChEBI" id="CHEBI:29108"/>
    </ligand>
</feature>
<feature type="binding site" evidence="1">
    <location>
        <position position="194"/>
    </location>
    <ligand>
        <name>Ca(2+)</name>
        <dbReference type="ChEBI" id="CHEBI:29108"/>
    </ligand>
</feature>
<feature type="disulfide bond" evidence="5">
    <location>
        <begin position="22"/>
        <end position="73"/>
    </location>
</feature>
<feature type="disulfide bond" evidence="5">
    <location>
        <begin position="32"/>
        <end position="63"/>
    </location>
</feature>
<feature type="disulfide bond" evidence="5">
    <location>
        <begin position="38"/>
        <end position="74"/>
    </location>
</feature>
<feature type="disulfide bond" evidence="4">
    <location>
        <begin position="151"/>
        <end position="167"/>
    </location>
</feature>
<feature type="disulfide bond" evidence="4">
    <location>
        <begin position="292"/>
        <end position="307"/>
    </location>
</feature>
<feature type="disulfide bond" evidence="4">
    <location>
        <begin position="317"/>
        <end position="346"/>
    </location>
</feature>
<proteinExistence type="evidence at protein level"/>
<name>PPAE1_SPOLT</name>
<gene>
    <name evidence="10 13" type="primary">PPAE1</name>
</gene>
<accession>Q49QW1</accession>
<organism evidence="13">
    <name type="scientific">Spodoptera litura</name>
    <name type="common">Asian cotton leafworm</name>
    <dbReference type="NCBI Taxonomy" id="69820"/>
    <lineage>
        <taxon>Eukaryota</taxon>
        <taxon>Metazoa</taxon>
        <taxon>Ecdysozoa</taxon>
        <taxon>Arthropoda</taxon>
        <taxon>Hexapoda</taxon>
        <taxon>Insecta</taxon>
        <taxon>Pterygota</taxon>
        <taxon>Neoptera</taxon>
        <taxon>Endopterygota</taxon>
        <taxon>Lepidoptera</taxon>
        <taxon>Glossata</taxon>
        <taxon>Ditrysia</taxon>
        <taxon>Noctuoidea</taxon>
        <taxon>Noctuidae</taxon>
        <taxon>Amphipyrinae</taxon>
        <taxon>Spodoptera</taxon>
    </lineage>
</organism>
<keyword id="KW-0106">Calcium</keyword>
<keyword id="KW-1015">Disulfide bond</keyword>
<keyword id="KW-0378">Hydrolase</keyword>
<keyword id="KW-0479">Metal-binding</keyword>
<keyword id="KW-0645">Protease</keyword>
<keyword id="KW-1185">Reference proteome</keyword>
<keyword id="KW-0964">Secreted</keyword>
<keyword id="KW-0720">Serine protease</keyword>
<keyword id="KW-0732">Signal</keyword>
<keyword id="KW-0865">Zymogen</keyword>
<protein>
    <recommendedName>
        <fullName evidence="11">Phenoloxidase-activating enzyme 1</fullName>
        <ecNumber evidence="4 6 9">3.4.21.-</ecNumber>
    </recommendedName>
    <alternativeName>
        <fullName evidence="10">Prophenoloxidase-activating enzyme 1</fullName>
    </alternativeName>
    <alternativeName>
        <fullName evidence="11">Serine protease PPAE1</fullName>
        <shortName evidence="10">Slppae1</shortName>
    </alternativeName>
</protein>
<evidence type="ECO:0000250" key="1">
    <source>
        <dbReference type="UniProtKB" id="O97366"/>
    </source>
</evidence>
<evidence type="ECO:0000250" key="2">
    <source>
        <dbReference type="UniProtKB" id="Q9V3Z2"/>
    </source>
</evidence>
<evidence type="ECO:0000255" key="3"/>
<evidence type="ECO:0000255" key="4">
    <source>
        <dbReference type="PROSITE-ProRule" id="PRU00274"/>
    </source>
</evidence>
<evidence type="ECO:0000255" key="5">
    <source>
        <dbReference type="PROSITE-ProRule" id="PRU01236"/>
    </source>
</evidence>
<evidence type="ECO:0000255" key="6">
    <source>
        <dbReference type="RuleBase" id="RU363034"/>
    </source>
</evidence>
<evidence type="ECO:0000255" key="7">
    <source>
        <dbReference type="RuleBase" id="RU366078"/>
    </source>
</evidence>
<evidence type="ECO:0000256" key="8">
    <source>
        <dbReference type="SAM" id="MobiDB-lite"/>
    </source>
</evidence>
<evidence type="ECO:0000269" key="9">
    <source>
    </source>
</evidence>
<evidence type="ECO:0000303" key="10">
    <source>
    </source>
</evidence>
<evidence type="ECO:0000305" key="11"/>
<evidence type="ECO:0000305" key="12">
    <source>
    </source>
</evidence>
<evidence type="ECO:0000312" key="13">
    <source>
        <dbReference type="EMBL" id="AAW24480.1"/>
    </source>
</evidence>
<sequence>MWKSLVFFVSALIWSFGSSQDCTTPTGSRSNCVSLYQCQPLYNAFEQRPLPTHVVSYLGRSQCGFEGYVPRVCCGPLPEEQEATSARPTQAPTQGSSDVFPEDSSPAPRNQCGIDTTGDRVYGGTITDLDEFPWMALLGYRTKKGTTSYQCGGVLVNHRYILTAAHCITGAIEQAVGTLITVRLGEYDTQQDVDCIDSVCADRPQEIRVASAYPHPGYSDKNKNRQDDIGIVRLATRAAYTYYVQPICLIDNRARLDTGSDVYVAGWGKTLNGRNSPIKLKLNLPIFNKQECDDKHRGEVLSSVQICAGGVFAEDACRGDSGGPLMKKTPNGIWEVVGVVSFGYGCGRDGWPGVYTSVARYIDWIQNTIASSNV</sequence>